<reference key="1">
    <citation type="journal article" date="2008" name="J. Bacteriol.">
        <title>Genome sequence of Lactobacillus helveticus: an organism distinguished by selective gene loss and IS element expansion.</title>
        <authorList>
            <person name="Callanan M."/>
            <person name="Kaleta P."/>
            <person name="O'Callaghan J."/>
            <person name="O'Sullivan O."/>
            <person name="Jordan K."/>
            <person name="McAuliffe O."/>
            <person name="Sangrador-Vegas A."/>
            <person name="Slattery L."/>
            <person name="Fitzgerald G.F."/>
            <person name="Beresford T."/>
            <person name="Ross R.P."/>
        </authorList>
    </citation>
    <scope>NUCLEOTIDE SEQUENCE [LARGE SCALE GENOMIC DNA]</scope>
    <source>
        <strain>DPC 4571</strain>
    </source>
</reference>
<gene>
    <name evidence="1" type="primary">recO</name>
    <name type="ordered locus">lhv_1300</name>
</gene>
<accession>A8YVM6</accession>
<dbReference type="EMBL" id="CP000517">
    <property type="protein sequence ID" value="ABX27313.1"/>
    <property type="molecule type" value="Genomic_DNA"/>
</dbReference>
<dbReference type="RefSeq" id="WP_012211975.1">
    <property type="nucleotide sequence ID" value="NC_010080.1"/>
</dbReference>
<dbReference type="SMR" id="A8YVM6"/>
<dbReference type="KEGG" id="lhe:lhv_1300"/>
<dbReference type="eggNOG" id="COG1381">
    <property type="taxonomic scope" value="Bacteria"/>
</dbReference>
<dbReference type="HOGENOM" id="CLU_066632_4_0_9"/>
<dbReference type="Proteomes" id="UP000000790">
    <property type="component" value="Chromosome"/>
</dbReference>
<dbReference type="GO" id="GO:0043590">
    <property type="term" value="C:bacterial nucleoid"/>
    <property type="evidence" value="ECO:0007669"/>
    <property type="project" value="TreeGrafter"/>
</dbReference>
<dbReference type="GO" id="GO:0006310">
    <property type="term" value="P:DNA recombination"/>
    <property type="evidence" value="ECO:0007669"/>
    <property type="project" value="UniProtKB-UniRule"/>
</dbReference>
<dbReference type="GO" id="GO:0006302">
    <property type="term" value="P:double-strand break repair"/>
    <property type="evidence" value="ECO:0007669"/>
    <property type="project" value="TreeGrafter"/>
</dbReference>
<dbReference type="Gene3D" id="2.40.50.140">
    <property type="entry name" value="Nucleic acid-binding proteins"/>
    <property type="match status" value="1"/>
</dbReference>
<dbReference type="Gene3D" id="1.20.1440.120">
    <property type="entry name" value="Recombination protein O, C-terminal domain"/>
    <property type="match status" value="1"/>
</dbReference>
<dbReference type="Gene3D" id="6.20.220.20">
    <property type="entry name" value="Recombination protein O, zinc-binding domain"/>
    <property type="match status" value="1"/>
</dbReference>
<dbReference type="HAMAP" id="MF_00201">
    <property type="entry name" value="RecO"/>
    <property type="match status" value="1"/>
</dbReference>
<dbReference type="InterPro" id="IPR037278">
    <property type="entry name" value="ARFGAP/RecO"/>
</dbReference>
<dbReference type="InterPro" id="IPR022572">
    <property type="entry name" value="DNA_rep/recomb_RecO_N"/>
</dbReference>
<dbReference type="InterPro" id="IPR012340">
    <property type="entry name" value="NA-bd_OB-fold"/>
</dbReference>
<dbReference type="InterPro" id="IPR003717">
    <property type="entry name" value="RecO"/>
</dbReference>
<dbReference type="InterPro" id="IPR042242">
    <property type="entry name" value="RecO_C"/>
</dbReference>
<dbReference type="NCBIfam" id="TIGR00613">
    <property type="entry name" value="reco"/>
    <property type="match status" value="1"/>
</dbReference>
<dbReference type="PANTHER" id="PTHR33991">
    <property type="entry name" value="DNA REPAIR PROTEIN RECO"/>
    <property type="match status" value="1"/>
</dbReference>
<dbReference type="PANTHER" id="PTHR33991:SF1">
    <property type="entry name" value="DNA REPAIR PROTEIN RECO"/>
    <property type="match status" value="1"/>
</dbReference>
<dbReference type="Pfam" id="PF02565">
    <property type="entry name" value="RecO_C"/>
    <property type="match status" value="1"/>
</dbReference>
<dbReference type="Pfam" id="PF11967">
    <property type="entry name" value="RecO_N"/>
    <property type="match status" value="1"/>
</dbReference>
<dbReference type="SUPFAM" id="SSF57863">
    <property type="entry name" value="ArfGap/RecO-like zinc finger"/>
    <property type="match status" value="1"/>
</dbReference>
<dbReference type="SUPFAM" id="SSF50249">
    <property type="entry name" value="Nucleic acid-binding proteins"/>
    <property type="match status" value="1"/>
</dbReference>
<organism>
    <name type="scientific">Lactobacillus helveticus (strain DPC 4571)</name>
    <dbReference type="NCBI Taxonomy" id="405566"/>
    <lineage>
        <taxon>Bacteria</taxon>
        <taxon>Bacillati</taxon>
        <taxon>Bacillota</taxon>
        <taxon>Bacilli</taxon>
        <taxon>Lactobacillales</taxon>
        <taxon>Lactobacillaceae</taxon>
        <taxon>Lactobacillus</taxon>
    </lineage>
</organism>
<feature type="chain" id="PRO_1000071722" description="DNA repair protein RecO">
    <location>
        <begin position="1"/>
        <end position="250"/>
    </location>
</feature>
<evidence type="ECO:0000255" key="1">
    <source>
        <dbReference type="HAMAP-Rule" id="MF_00201"/>
    </source>
</evidence>
<comment type="function">
    <text evidence="1">Involved in DNA repair and RecF pathway recombination.</text>
</comment>
<comment type="similarity">
    <text evidence="1">Belongs to the RecO family.</text>
</comment>
<proteinExistence type="inferred from homology"/>
<sequence length="250" mass="28479">MARELKEVQGIIFKRQKYKEADLLAKIMTKQDGIITLIVKGALRPKSQLSAATLNFSMGTYVIYTSGHGLSNLRTYKEVKQFDGLYRDLTKNAYTSFIFDLIDHAFVEYQPLGKYYDLAVFALKKIDAGVDNEMITQIVQMKMLSAFGVEPELRHCVICGKERGVFDYSIKLGGIVCSDHFAKVNSRLHLTPKQTAVLRTIGLLPIERLGNIELNSETKKATRKAIDRIYRETIDLNLKTKKFLDEIKLF</sequence>
<protein>
    <recommendedName>
        <fullName evidence="1">DNA repair protein RecO</fullName>
    </recommendedName>
    <alternativeName>
        <fullName evidence="1">Recombination protein O</fullName>
    </alternativeName>
</protein>
<name>RECO_LACH4</name>
<keyword id="KW-0227">DNA damage</keyword>
<keyword id="KW-0233">DNA recombination</keyword>
<keyword id="KW-0234">DNA repair</keyword>